<dbReference type="EC" id="2.9.1.3" evidence="1"/>
<dbReference type="EMBL" id="AM902716">
    <property type="protein sequence ID" value="CAP44233.1"/>
    <property type="molecule type" value="Genomic_DNA"/>
</dbReference>
<dbReference type="SMR" id="A9I3Z9"/>
<dbReference type="STRING" id="94624.Bpet3887"/>
<dbReference type="KEGG" id="bpt:Bpet3887"/>
<dbReference type="eggNOG" id="COG2603">
    <property type="taxonomic scope" value="Bacteria"/>
</dbReference>
<dbReference type="Proteomes" id="UP000001225">
    <property type="component" value="Chromosome"/>
</dbReference>
<dbReference type="GO" id="GO:0016765">
    <property type="term" value="F:transferase activity, transferring alkyl or aryl (other than methyl) groups"/>
    <property type="evidence" value="ECO:0007669"/>
    <property type="project" value="UniProtKB-UniRule"/>
</dbReference>
<dbReference type="GO" id="GO:0043828">
    <property type="term" value="F:tRNA 2-selenouridine synthase activity"/>
    <property type="evidence" value="ECO:0007669"/>
    <property type="project" value="UniProtKB-EC"/>
</dbReference>
<dbReference type="GO" id="GO:0002098">
    <property type="term" value="P:tRNA wobble uridine modification"/>
    <property type="evidence" value="ECO:0007669"/>
    <property type="project" value="UniProtKB-UniRule"/>
</dbReference>
<dbReference type="CDD" id="cd01520">
    <property type="entry name" value="RHOD_YbbB"/>
    <property type="match status" value="1"/>
</dbReference>
<dbReference type="Gene3D" id="3.40.250.10">
    <property type="entry name" value="Rhodanese-like domain"/>
    <property type="match status" value="1"/>
</dbReference>
<dbReference type="HAMAP" id="MF_01622">
    <property type="entry name" value="tRNA_sel_U_synth"/>
    <property type="match status" value="1"/>
</dbReference>
<dbReference type="InterPro" id="IPR027417">
    <property type="entry name" value="P-loop_NTPase"/>
</dbReference>
<dbReference type="InterPro" id="IPR001763">
    <property type="entry name" value="Rhodanese-like_dom"/>
</dbReference>
<dbReference type="InterPro" id="IPR036873">
    <property type="entry name" value="Rhodanese-like_dom_sf"/>
</dbReference>
<dbReference type="InterPro" id="IPR017582">
    <property type="entry name" value="SelU"/>
</dbReference>
<dbReference type="NCBIfam" id="NF008750">
    <property type="entry name" value="PRK11784.1-2"/>
    <property type="match status" value="1"/>
</dbReference>
<dbReference type="NCBIfam" id="NF008751">
    <property type="entry name" value="PRK11784.1-3"/>
    <property type="match status" value="1"/>
</dbReference>
<dbReference type="NCBIfam" id="TIGR03167">
    <property type="entry name" value="tRNA_sel_U_synt"/>
    <property type="match status" value="1"/>
</dbReference>
<dbReference type="PANTHER" id="PTHR30401">
    <property type="entry name" value="TRNA 2-SELENOURIDINE SYNTHASE"/>
    <property type="match status" value="1"/>
</dbReference>
<dbReference type="PANTHER" id="PTHR30401:SF0">
    <property type="entry name" value="TRNA 2-SELENOURIDINE SYNTHASE"/>
    <property type="match status" value="1"/>
</dbReference>
<dbReference type="SMART" id="SM00450">
    <property type="entry name" value="RHOD"/>
    <property type="match status" value="1"/>
</dbReference>
<dbReference type="SUPFAM" id="SSF52540">
    <property type="entry name" value="P-loop containing nucleoside triphosphate hydrolases"/>
    <property type="match status" value="1"/>
</dbReference>
<dbReference type="SUPFAM" id="SSF52821">
    <property type="entry name" value="Rhodanese/Cell cycle control phosphatase"/>
    <property type="match status" value="1"/>
</dbReference>
<dbReference type="PROSITE" id="PS50206">
    <property type="entry name" value="RHODANESE_3"/>
    <property type="match status" value="1"/>
</dbReference>
<keyword id="KW-0711">Selenium</keyword>
<keyword id="KW-0808">Transferase</keyword>
<accession>A9I3Z9</accession>
<feature type="chain" id="PRO_1000186063" description="tRNA 2-selenouridine synthase">
    <location>
        <begin position="1"/>
        <end position="374"/>
    </location>
</feature>
<feature type="domain" description="Rhodanese" evidence="1">
    <location>
        <begin position="12"/>
        <end position="136"/>
    </location>
</feature>
<feature type="active site" description="S-selanylcysteine intermediate" evidence="1">
    <location>
        <position position="95"/>
    </location>
</feature>
<organism>
    <name type="scientific">Bordetella petrii (strain ATCC BAA-461 / DSM 12804 / CCUG 43448)</name>
    <dbReference type="NCBI Taxonomy" id="340100"/>
    <lineage>
        <taxon>Bacteria</taxon>
        <taxon>Pseudomonadati</taxon>
        <taxon>Pseudomonadota</taxon>
        <taxon>Betaproteobacteria</taxon>
        <taxon>Burkholderiales</taxon>
        <taxon>Alcaligenaceae</taxon>
        <taxon>Bordetella</taxon>
    </lineage>
</organism>
<reference key="1">
    <citation type="journal article" date="2008" name="BMC Genomics">
        <title>The missing link: Bordetella petrii is endowed with both the metabolic versatility of environmental bacteria and virulence traits of pathogenic Bordetellae.</title>
        <authorList>
            <person name="Gross R."/>
            <person name="Guzman C.A."/>
            <person name="Sebaihia M."/>
            <person name="Martin dos Santos V.A.P."/>
            <person name="Pieper D.H."/>
            <person name="Koebnik R."/>
            <person name="Lechner M."/>
            <person name="Bartels D."/>
            <person name="Buhrmester J."/>
            <person name="Choudhuri J.V."/>
            <person name="Ebensen T."/>
            <person name="Gaigalat L."/>
            <person name="Herrmann S."/>
            <person name="Khachane A.N."/>
            <person name="Larisch C."/>
            <person name="Link S."/>
            <person name="Linke B."/>
            <person name="Meyer F."/>
            <person name="Mormann S."/>
            <person name="Nakunst D."/>
            <person name="Rueckert C."/>
            <person name="Schneiker-Bekel S."/>
            <person name="Schulze K."/>
            <person name="Voerholter F.-J."/>
            <person name="Yevsa T."/>
            <person name="Engle J.T."/>
            <person name="Goldman W.E."/>
            <person name="Puehler A."/>
            <person name="Goebel U.B."/>
            <person name="Goesmann A."/>
            <person name="Bloecker H."/>
            <person name="Kaiser O."/>
            <person name="Martinez-Arias R."/>
        </authorList>
    </citation>
    <scope>NUCLEOTIDE SEQUENCE [LARGE SCALE GENOMIC DNA]</scope>
    <source>
        <strain>ATCC BAA-461 / DSM 12804 / CCUG 43448</strain>
    </source>
</reference>
<proteinExistence type="inferred from homology"/>
<sequence>MRADTNNYRELFLRDVPMLDTRAPTEFSKGAFPGAVNLPLMDDAERQQVGLCYKQRGQDAAIALGHQLVSGPIKARRVAAWADFARAHPDGYLYCFRGGLRSQISQAWLKNEAGIEYPRVIGGYKAMRGFLLQTIDDAVAQCGFVVLGGMTGTGKTDLLRQLDNSLDLEHHAHHRGSSFGKHAVGQPTQIDFDNRLAIDILKKRAAGHDRFVLEDESQAIGACSLPFELYRGMQEYPVVWLEDTTENRVNRILRDYVIDLCAEFVDVHGPEQGFDRFAERLRQSLDNISRRLGGERHRQLAGVMDAALAEQQRSGRVDAHRAWIAALLAQYYDPMYAYQRQRKSQRIVFAGDHQSVLQYLRDPPAVGRALKGFP</sequence>
<protein>
    <recommendedName>
        <fullName evidence="1">tRNA 2-selenouridine synthase</fullName>
        <ecNumber evidence="1">2.9.1.3</ecNumber>
    </recommendedName>
</protein>
<name>SELU_BORPD</name>
<evidence type="ECO:0000255" key="1">
    <source>
        <dbReference type="HAMAP-Rule" id="MF_01622"/>
    </source>
</evidence>
<comment type="function">
    <text evidence="1">Involved in the post-transcriptional modification of the uridine at the wobble position (U34) of tRNA(Lys), tRNA(Glu) and tRNA(Gln). Catalyzes the conversion of 2-thiouridine (S2U-RNA) to 2-selenouridine (Se2U-RNA). Acts in a two-step process involving geranylation of 2-thiouridine (S2U) to S-geranyl-2-thiouridine (geS2U) and subsequent selenation of the latter derivative to 2-selenouridine (Se2U) in the tRNA chain.</text>
</comment>
<comment type="catalytic activity">
    <reaction evidence="1">
        <text>5-methylaminomethyl-2-thiouridine(34) in tRNA + selenophosphate + (2E)-geranyl diphosphate + H2O + H(+) = 5-methylaminomethyl-2-selenouridine(34) in tRNA + (2E)-thiogeraniol + phosphate + diphosphate</text>
        <dbReference type="Rhea" id="RHEA:42716"/>
        <dbReference type="Rhea" id="RHEA-COMP:10195"/>
        <dbReference type="Rhea" id="RHEA-COMP:10196"/>
        <dbReference type="ChEBI" id="CHEBI:15377"/>
        <dbReference type="ChEBI" id="CHEBI:15378"/>
        <dbReference type="ChEBI" id="CHEBI:16144"/>
        <dbReference type="ChEBI" id="CHEBI:33019"/>
        <dbReference type="ChEBI" id="CHEBI:43474"/>
        <dbReference type="ChEBI" id="CHEBI:58057"/>
        <dbReference type="ChEBI" id="CHEBI:74455"/>
        <dbReference type="ChEBI" id="CHEBI:82743"/>
        <dbReference type="ChEBI" id="CHEBI:143703"/>
        <dbReference type="EC" id="2.9.1.3"/>
    </reaction>
    <physiologicalReaction direction="left-to-right" evidence="1">
        <dbReference type="Rhea" id="RHEA:42717"/>
    </physiologicalReaction>
</comment>
<comment type="catalytic activity">
    <reaction evidence="1">
        <text>5-methylaminomethyl-2-thiouridine(34) in tRNA + (2E)-geranyl diphosphate = 5-methylaminomethyl-S-(2E)-geranyl-thiouridine(34) in tRNA + diphosphate</text>
        <dbReference type="Rhea" id="RHEA:14085"/>
        <dbReference type="Rhea" id="RHEA-COMP:10195"/>
        <dbReference type="Rhea" id="RHEA-COMP:14654"/>
        <dbReference type="ChEBI" id="CHEBI:33019"/>
        <dbReference type="ChEBI" id="CHEBI:58057"/>
        <dbReference type="ChEBI" id="CHEBI:74455"/>
        <dbReference type="ChEBI" id="CHEBI:140632"/>
    </reaction>
    <physiologicalReaction direction="left-to-right" evidence="1">
        <dbReference type="Rhea" id="RHEA:14086"/>
    </physiologicalReaction>
</comment>
<comment type="catalytic activity">
    <reaction evidence="1">
        <text>5-methylaminomethyl-S-(2E)-geranyl-thiouridine(34) in tRNA + selenophosphate + H(+) = 5-methylaminomethyl-2-(Se-phospho)selenouridine(34) in tRNA + (2E)-thiogeraniol</text>
        <dbReference type="Rhea" id="RHEA:60172"/>
        <dbReference type="Rhea" id="RHEA-COMP:14654"/>
        <dbReference type="Rhea" id="RHEA-COMP:15523"/>
        <dbReference type="ChEBI" id="CHEBI:15378"/>
        <dbReference type="ChEBI" id="CHEBI:16144"/>
        <dbReference type="ChEBI" id="CHEBI:140632"/>
        <dbReference type="ChEBI" id="CHEBI:143702"/>
        <dbReference type="ChEBI" id="CHEBI:143703"/>
    </reaction>
    <physiologicalReaction direction="left-to-right" evidence="1">
        <dbReference type="Rhea" id="RHEA:60173"/>
    </physiologicalReaction>
</comment>
<comment type="catalytic activity">
    <reaction evidence="1">
        <text>5-methylaminomethyl-2-(Se-phospho)selenouridine(34) in tRNA + H2O = 5-methylaminomethyl-2-selenouridine(34) in tRNA + phosphate</text>
        <dbReference type="Rhea" id="RHEA:60176"/>
        <dbReference type="Rhea" id="RHEA-COMP:10196"/>
        <dbReference type="Rhea" id="RHEA-COMP:15523"/>
        <dbReference type="ChEBI" id="CHEBI:15377"/>
        <dbReference type="ChEBI" id="CHEBI:43474"/>
        <dbReference type="ChEBI" id="CHEBI:82743"/>
        <dbReference type="ChEBI" id="CHEBI:143702"/>
    </reaction>
    <physiologicalReaction direction="left-to-right" evidence="1">
        <dbReference type="Rhea" id="RHEA:60177"/>
    </physiologicalReaction>
</comment>
<comment type="subunit">
    <text evidence="1">Monomer.</text>
</comment>
<comment type="similarity">
    <text evidence="1">Belongs to the SelU family.</text>
</comment>
<gene>
    <name evidence="1" type="primary">selU</name>
    <name type="ordered locus">Bpet3887</name>
</gene>